<sequence length="604" mass="65913">MSEHDMQNTNPPLPPLPPEITQLLSGLDAAQWAWLSGYAWAKAGNGASAGLPALQTALPTAEPFSVTVLSASQTGNAKSVADKAADSLEAAGIQVSRAELKDYKAKNIAGERRLLLVTSTQGEGEPPEEAVVLHKLLNGKKAPKLDKLQFAVLGLGDSSYPNFCRAGKDFDKRFEELGAKRLLERVDADLDFAAAANAWTDNIAALLKEEAAKNRATPAPQATPPAGLQTASEGRYCKADPFPAALLANQKITARQSDKDVRHIEIDLSGSDLHYLPGDALGVWFDNDPALVREILDLLGIDPATEIQAGGKTLPVASALLSHFELTQNTPAFVKGYAPFADDDELDRIAADNAVLQGFVQSTPIADVLHRFPAKLTAEQFAGLLRPLAPRLYSISSSQAEVGDEVHLTVGAVRFEHEGRARVGGASGFLADRLEEDGTVRVFVERNDGFRLPEDSRKPIVMIGSGTGVAPFRAFVQQRAAENAEGKNWLIFGNPHFAADFLYQTEWQQFAKDGFLHRYDFAWSRDQEEKIYVQDKIREQAEGLWQWLQEGAHIYVCGDAAKMAKDVEAALLDVIIGAGHLDEEGAEEYLDMLREEKRYQRDVY</sequence>
<dbReference type="EC" id="1.8.1.2" evidence="1"/>
<dbReference type="EMBL" id="CP000381">
    <property type="protein sequence ID" value="ABX73250.1"/>
    <property type="molecule type" value="Genomic_DNA"/>
</dbReference>
<dbReference type="RefSeq" id="WP_012221645.1">
    <property type="nucleotide sequence ID" value="NC_010120.1"/>
</dbReference>
<dbReference type="SMR" id="A9LZ73"/>
<dbReference type="KEGG" id="nmn:NMCC_1070"/>
<dbReference type="HOGENOM" id="CLU_001570_17_7_4"/>
<dbReference type="UniPathway" id="UPA00140">
    <property type="reaction ID" value="UER00207"/>
</dbReference>
<dbReference type="Proteomes" id="UP000001177">
    <property type="component" value="Chromosome"/>
</dbReference>
<dbReference type="GO" id="GO:0005829">
    <property type="term" value="C:cytosol"/>
    <property type="evidence" value="ECO:0007669"/>
    <property type="project" value="TreeGrafter"/>
</dbReference>
<dbReference type="GO" id="GO:0050660">
    <property type="term" value="F:flavin adenine dinucleotide binding"/>
    <property type="evidence" value="ECO:0007669"/>
    <property type="project" value="InterPro"/>
</dbReference>
<dbReference type="GO" id="GO:0010181">
    <property type="term" value="F:FMN binding"/>
    <property type="evidence" value="ECO:0007669"/>
    <property type="project" value="InterPro"/>
</dbReference>
<dbReference type="GO" id="GO:0004783">
    <property type="term" value="F:sulfite reductase (NADPH) activity"/>
    <property type="evidence" value="ECO:0007669"/>
    <property type="project" value="UniProtKB-UniRule"/>
</dbReference>
<dbReference type="GO" id="GO:0019344">
    <property type="term" value="P:cysteine biosynthetic process"/>
    <property type="evidence" value="ECO:0007669"/>
    <property type="project" value="UniProtKB-KW"/>
</dbReference>
<dbReference type="GO" id="GO:0070814">
    <property type="term" value="P:hydrogen sulfide biosynthetic process"/>
    <property type="evidence" value="ECO:0007669"/>
    <property type="project" value="UniProtKB-UniRule"/>
</dbReference>
<dbReference type="GO" id="GO:0000103">
    <property type="term" value="P:sulfate assimilation"/>
    <property type="evidence" value="ECO:0007669"/>
    <property type="project" value="UniProtKB-UniRule"/>
</dbReference>
<dbReference type="CDD" id="cd06199">
    <property type="entry name" value="SiR"/>
    <property type="match status" value="1"/>
</dbReference>
<dbReference type="FunFam" id="3.40.50.80:FF:000001">
    <property type="entry name" value="NADPH--cytochrome P450 reductase 1"/>
    <property type="match status" value="1"/>
</dbReference>
<dbReference type="FunFam" id="3.40.50.360:FF:000018">
    <property type="entry name" value="Sulfite reductase [NADPH] flavoprotein alpha-component"/>
    <property type="match status" value="1"/>
</dbReference>
<dbReference type="Gene3D" id="3.40.50.360">
    <property type="match status" value="1"/>
</dbReference>
<dbReference type="Gene3D" id="1.20.990.10">
    <property type="entry name" value="NADPH-cytochrome p450 Reductase, Chain A, domain 3"/>
    <property type="match status" value="1"/>
</dbReference>
<dbReference type="Gene3D" id="3.40.50.80">
    <property type="entry name" value="Nucleotide-binding domain of ferredoxin-NADP reductase (FNR) module"/>
    <property type="match status" value="1"/>
</dbReference>
<dbReference type="Gene3D" id="2.40.30.10">
    <property type="entry name" value="Translation factors"/>
    <property type="match status" value="1"/>
</dbReference>
<dbReference type="HAMAP" id="MF_01541">
    <property type="entry name" value="CysJ"/>
    <property type="match status" value="1"/>
</dbReference>
<dbReference type="InterPro" id="IPR010199">
    <property type="entry name" value="CysJ"/>
</dbReference>
<dbReference type="InterPro" id="IPR003097">
    <property type="entry name" value="CysJ-like_FAD-binding"/>
</dbReference>
<dbReference type="InterPro" id="IPR029758">
    <property type="entry name" value="CysJ_Proteobact"/>
</dbReference>
<dbReference type="InterPro" id="IPR017927">
    <property type="entry name" value="FAD-bd_FR_type"/>
</dbReference>
<dbReference type="InterPro" id="IPR001094">
    <property type="entry name" value="Flavdoxin-like"/>
</dbReference>
<dbReference type="InterPro" id="IPR008254">
    <property type="entry name" value="Flavodoxin/NO_synth"/>
</dbReference>
<dbReference type="InterPro" id="IPR001709">
    <property type="entry name" value="Flavoprot_Pyr_Nucl_cyt_Rdtase"/>
</dbReference>
<dbReference type="InterPro" id="IPR029039">
    <property type="entry name" value="Flavoprotein-like_sf"/>
</dbReference>
<dbReference type="InterPro" id="IPR039261">
    <property type="entry name" value="FNR_nucleotide-bd"/>
</dbReference>
<dbReference type="InterPro" id="IPR023173">
    <property type="entry name" value="NADPH_Cyt_P450_Rdtase_alpha"/>
</dbReference>
<dbReference type="InterPro" id="IPR001433">
    <property type="entry name" value="OxRdtase_FAD/NAD-bd"/>
</dbReference>
<dbReference type="InterPro" id="IPR017938">
    <property type="entry name" value="Riboflavin_synthase-like_b-brl"/>
</dbReference>
<dbReference type="NCBIfam" id="TIGR01931">
    <property type="entry name" value="cysJ"/>
    <property type="match status" value="1"/>
</dbReference>
<dbReference type="PANTHER" id="PTHR19384:SF128">
    <property type="entry name" value="NADPH OXIDOREDUCTASE A"/>
    <property type="match status" value="1"/>
</dbReference>
<dbReference type="PANTHER" id="PTHR19384">
    <property type="entry name" value="NITRIC OXIDE SYNTHASE-RELATED"/>
    <property type="match status" value="1"/>
</dbReference>
<dbReference type="Pfam" id="PF00667">
    <property type="entry name" value="FAD_binding_1"/>
    <property type="match status" value="1"/>
</dbReference>
<dbReference type="Pfam" id="PF00258">
    <property type="entry name" value="Flavodoxin_1"/>
    <property type="match status" value="1"/>
</dbReference>
<dbReference type="Pfam" id="PF00175">
    <property type="entry name" value="NAD_binding_1"/>
    <property type="match status" value="1"/>
</dbReference>
<dbReference type="PIRSF" id="PIRSF000207">
    <property type="entry name" value="SiR-FP_CysJ"/>
    <property type="match status" value="1"/>
</dbReference>
<dbReference type="PRINTS" id="PR00369">
    <property type="entry name" value="FLAVODOXIN"/>
</dbReference>
<dbReference type="PRINTS" id="PR00371">
    <property type="entry name" value="FPNCR"/>
</dbReference>
<dbReference type="SUPFAM" id="SSF52343">
    <property type="entry name" value="Ferredoxin reductase-like, C-terminal NADP-linked domain"/>
    <property type="match status" value="1"/>
</dbReference>
<dbReference type="SUPFAM" id="SSF52218">
    <property type="entry name" value="Flavoproteins"/>
    <property type="match status" value="1"/>
</dbReference>
<dbReference type="SUPFAM" id="SSF63380">
    <property type="entry name" value="Riboflavin synthase domain-like"/>
    <property type="match status" value="1"/>
</dbReference>
<dbReference type="PROSITE" id="PS51384">
    <property type="entry name" value="FAD_FR"/>
    <property type="match status" value="1"/>
</dbReference>
<dbReference type="PROSITE" id="PS50902">
    <property type="entry name" value="FLAVODOXIN_LIKE"/>
    <property type="match status" value="1"/>
</dbReference>
<reference key="1">
    <citation type="journal article" date="2008" name="Genomics">
        <title>Characterization of ST-4821 complex, a unique Neisseria meningitidis clone.</title>
        <authorList>
            <person name="Peng J."/>
            <person name="Yang L."/>
            <person name="Yang F."/>
            <person name="Yang J."/>
            <person name="Yan Y."/>
            <person name="Nie H."/>
            <person name="Zhang X."/>
            <person name="Xiong Z."/>
            <person name="Jiang Y."/>
            <person name="Cheng F."/>
            <person name="Xu X."/>
            <person name="Chen S."/>
            <person name="Sun L."/>
            <person name="Li W."/>
            <person name="Shen Y."/>
            <person name="Shao Z."/>
            <person name="Liang X."/>
            <person name="Xu J."/>
            <person name="Jin Q."/>
        </authorList>
    </citation>
    <scope>NUCLEOTIDE SEQUENCE [LARGE SCALE GENOMIC DNA]</scope>
    <source>
        <strain>053442</strain>
    </source>
</reference>
<evidence type="ECO:0000255" key="1">
    <source>
        <dbReference type="HAMAP-Rule" id="MF_01541"/>
    </source>
</evidence>
<keyword id="KW-0028">Amino-acid biosynthesis</keyword>
<keyword id="KW-0198">Cysteine biosynthesis</keyword>
<keyword id="KW-0249">Electron transport</keyword>
<keyword id="KW-0274">FAD</keyword>
<keyword id="KW-0285">Flavoprotein</keyword>
<keyword id="KW-0288">FMN</keyword>
<keyword id="KW-0521">NADP</keyword>
<keyword id="KW-0560">Oxidoreductase</keyword>
<keyword id="KW-0813">Transport</keyword>
<accession>A9LZ73</accession>
<feature type="chain" id="PRO_1000087638" description="Sulfite reductase [NADPH] flavoprotein alpha-component">
    <location>
        <begin position="1"/>
        <end position="604"/>
    </location>
</feature>
<feature type="domain" description="Flavodoxin-like" evidence="1">
    <location>
        <begin position="66"/>
        <end position="204"/>
    </location>
</feature>
<feature type="domain" description="FAD-binding FR-type" evidence="1">
    <location>
        <begin position="239"/>
        <end position="453"/>
    </location>
</feature>
<feature type="binding site" evidence="1">
    <location>
        <begin position="72"/>
        <end position="77"/>
    </location>
    <ligand>
        <name>FMN</name>
        <dbReference type="ChEBI" id="CHEBI:58210"/>
    </ligand>
</feature>
<feature type="binding site" evidence="1">
    <location>
        <begin position="119"/>
        <end position="122"/>
    </location>
    <ligand>
        <name>FMN</name>
        <dbReference type="ChEBI" id="CHEBI:58210"/>
    </ligand>
</feature>
<feature type="binding site" evidence="1">
    <location>
        <begin position="155"/>
        <end position="164"/>
    </location>
    <ligand>
        <name>FMN</name>
        <dbReference type="ChEBI" id="CHEBI:58210"/>
    </ligand>
</feature>
<feature type="binding site" evidence="1">
    <location>
        <position position="327"/>
    </location>
    <ligand>
        <name>FAD</name>
        <dbReference type="ChEBI" id="CHEBI:57692"/>
    </ligand>
</feature>
<feature type="binding site" evidence="1">
    <location>
        <position position="361"/>
    </location>
    <ligand>
        <name>FAD</name>
        <dbReference type="ChEBI" id="CHEBI:57692"/>
    </ligand>
</feature>
<feature type="binding site" evidence="1">
    <location>
        <begin position="391"/>
        <end position="394"/>
    </location>
    <ligand>
        <name>FAD</name>
        <dbReference type="ChEBI" id="CHEBI:57692"/>
    </ligand>
</feature>
<feature type="binding site" evidence="1">
    <location>
        <begin position="409"/>
        <end position="411"/>
    </location>
    <ligand>
        <name>FAD</name>
        <dbReference type="ChEBI" id="CHEBI:57692"/>
    </ligand>
</feature>
<feature type="binding site" evidence="1">
    <location>
        <begin position="424"/>
        <end position="427"/>
    </location>
    <ligand>
        <name>FAD</name>
        <dbReference type="ChEBI" id="CHEBI:57692"/>
    </ligand>
</feature>
<feature type="binding site" evidence="1">
    <location>
        <begin position="524"/>
        <end position="525"/>
    </location>
    <ligand>
        <name>NADP(+)</name>
        <dbReference type="ChEBI" id="CHEBI:58349"/>
    </ligand>
</feature>
<feature type="binding site" evidence="1">
    <location>
        <begin position="530"/>
        <end position="534"/>
    </location>
    <ligand>
        <name>NADP(+)</name>
        <dbReference type="ChEBI" id="CHEBI:58349"/>
    </ligand>
</feature>
<feature type="binding site" evidence="1">
    <location>
        <position position="566"/>
    </location>
    <ligand>
        <name>NADP(+)</name>
        <dbReference type="ChEBI" id="CHEBI:58349"/>
    </ligand>
</feature>
<feature type="binding site" evidence="1">
    <location>
        <position position="604"/>
    </location>
    <ligand>
        <name>FAD</name>
        <dbReference type="ChEBI" id="CHEBI:57692"/>
    </ligand>
</feature>
<proteinExistence type="inferred from homology"/>
<gene>
    <name evidence="1" type="primary">cysJ</name>
    <name type="ordered locus">NMCC_1070</name>
</gene>
<comment type="function">
    <text evidence="1">Component of the sulfite reductase complex that catalyzes the 6-electron reduction of sulfite to sulfide. This is one of several activities required for the biosynthesis of L-cysteine from sulfate. The flavoprotein component catalyzes the electron flow from NADPH -&gt; FAD -&gt; FMN to the hemoprotein component.</text>
</comment>
<comment type="catalytic activity">
    <reaction evidence="1">
        <text>hydrogen sulfide + 3 NADP(+) + 3 H2O = sulfite + 3 NADPH + 4 H(+)</text>
        <dbReference type="Rhea" id="RHEA:13801"/>
        <dbReference type="ChEBI" id="CHEBI:15377"/>
        <dbReference type="ChEBI" id="CHEBI:15378"/>
        <dbReference type="ChEBI" id="CHEBI:17359"/>
        <dbReference type="ChEBI" id="CHEBI:29919"/>
        <dbReference type="ChEBI" id="CHEBI:57783"/>
        <dbReference type="ChEBI" id="CHEBI:58349"/>
        <dbReference type="EC" id="1.8.1.2"/>
    </reaction>
</comment>
<comment type="cofactor">
    <cofactor evidence="1">
        <name>FAD</name>
        <dbReference type="ChEBI" id="CHEBI:57692"/>
    </cofactor>
    <text evidence="1">Binds 1 FAD per subunit.</text>
</comment>
<comment type="cofactor">
    <cofactor evidence="1">
        <name>FMN</name>
        <dbReference type="ChEBI" id="CHEBI:58210"/>
    </cofactor>
    <text evidence="1">Binds 1 FMN per subunit.</text>
</comment>
<comment type="pathway">
    <text evidence="1">Sulfur metabolism; hydrogen sulfide biosynthesis; hydrogen sulfide from sulfite (NADPH route): step 1/1.</text>
</comment>
<comment type="subunit">
    <text evidence="1">Alpha(8)-beta(8). The alpha component is a flavoprotein, the beta component is a hemoprotein.</text>
</comment>
<comment type="similarity">
    <text evidence="1">Belongs to the NADPH-dependent sulphite reductase flavoprotein subunit CysJ family.</text>
</comment>
<comment type="similarity">
    <text evidence="1">In the N-terminal section; belongs to the flavodoxin family.</text>
</comment>
<comment type="similarity">
    <text evidence="1">In the C-terminal section; belongs to the flavoprotein pyridine nucleotide cytochrome reductase family.</text>
</comment>
<organism>
    <name type="scientific">Neisseria meningitidis serogroup C (strain 053442)</name>
    <dbReference type="NCBI Taxonomy" id="374833"/>
    <lineage>
        <taxon>Bacteria</taxon>
        <taxon>Pseudomonadati</taxon>
        <taxon>Pseudomonadota</taxon>
        <taxon>Betaproteobacteria</taxon>
        <taxon>Neisseriales</taxon>
        <taxon>Neisseriaceae</taxon>
        <taxon>Neisseria</taxon>
    </lineage>
</organism>
<name>CYSJ_NEIM0</name>
<protein>
    <recommendedName>
        <fullName evidence="1">Sulfite reductase [NADPH] flavoprotein alpha-component</fullName>
        <shortName evidence="1">SiR-FP</shortName>
        <ecNumber evidence="1">1.8.1.2</ecNumber>
    </recommendedName>
</protein>